<dbReference type="EMBL" id="AL123456">
    <property type="protein sequence ID" value="CCP43239.1"/>
    <property type="molecule type" value="Genomic_DNA"/>
</dbReference>
<dbReference type="PIR" id="A70746">
    <property type="entry name" value="A70746"/>
</dbReference>
<dbReference type="RefSeq" id="NP_215016.1">
    <property type="nucleotide sequence ID" value="NC_000962.3"/>
</dbReference>
<dbReference type="RefSeq" id="WP_003898486.1">
    <property type="nucleotide sequence ID" value="NZ_NVQJ01000002.1"/>
</dbReference>
<dbReference type="FunCoup" id="P9WKT1">
    <property type="interactions" value="206"/>
</dbReference>
<dbReference type="STRING" id="83332.Rv0502"/>
<dbReference type="PaxDb" id="83332-Rv0502"/>
<dbReference type="DNASU" id="887260"/>
<dbReference type="GeneID" id="887260"/>
<dbReference type="KEGG" id="mtu:Rv0502"/>
<dbReference type="KEGG" id="mtv:RVBD_0502"/>
<dbReference type="TubercuList" id="Rv0502"/>
<dbReference type="eggNOG" id="COG0204">
    <property type="taxonomic scope" value="Bacteria"/>
</dbReference>
<dbReference type="InParanoid" id="P9WKT1"/>
<dbReference type="OrthoDB" id="5241618at2"/>
<dbReference type="PhylomeDB" id="P9WKT1"/>
<dbReference type="Proteomes" id="UP000001584">
    <property type="component" value="Chromosome"/>
</dbReference>
<dbReference type="GO" id="GO:0016020">
    <property type="term" value="C:membrane"/>
    <property type="evidence" value="ECO:0000318"/>
    <property type="project" value="GO_Central"/>
</dbReference>
<dbReference type="GO" id="GO:0005886">
    <property type="term" value="C:plasma membrane"/>
    <property type="evidence" value="ECO:0007005"/>
    <property type="project" value="MTBBASE"/>
</dbReference>
<dbReference type="GO" id="GO:0016746">
    <property type="term" value="F:acyltransferase activity"/>
    <property type="evidence" value="ECO:0007669"/>
    <property type="project" value="InterPro"/>
</dbReference>
<dbReference type="CDD" id="cd07987">
    <property type="entry name" value="LPLAT_MGAT-like"/>
    <property type="match status" value="1"/>
</dbReference>
<dbReference type="InterPro" id="IPR016676">
    <property type="entry name" value="P_lipid/glycerol_AcTrfase_prd"/>
</dbReference>
<dbReference type="InterPro" id="IPR002123">
    <property type="entry name" value="Plipid/glycerol_acylTrfase"/>
</dbReference>
<dbReference type="PANTHER" id="PTHR22753:SF14">
    <property type="entry name" value="MONOACYLGLYCEROL_DIACYLGLYCEROL O-ACYLTRANSFERASE"/>
    <property type="match status" value="1"/>
</dbReference>
<dbReference type="PANTHER" id="PTHR22753">
    <property type="entry name" value="TRANSMEMBRANE PROTEIN 68"/>
    <property type="match status" value="1"/>
</dbReference>
<dbReference type="Pfam" id="PF01553">
    <property type="entry name" value="Acyltransferase"/>
    <property type="match status" value="1"/>
</dbReference>
<dbReference type="PIRSF" id="PIRSF016753">
    <property type="entry name" value="P_lipid/glycerol_ac_tran_prd"/>
    <property type="match status" value="1"/>
</dbReference>
<dbReference type="SMART" id="SM00563">
    <property type="entry name" value="PlsC"/>
    <property type="match status" value="1"/>
</dbReference>
<dbReference type="SUPFAM" id="SSF69593">
    <property type="entry name" value="Glycerol-3-phosphate (1)-acyltransferase"/>
    <property type="match status" value="1"/>
</dbReference>
<reference key="1">
    <citation type="journal article" date="1998" name="Nature">
        <title>Deciphering the biology of Mycobacterium tuberculosis from the complete genome sequence.</title>
        <authorList>
            <person name="Cole S.T."/>
            <person name="Brosch R."/>
            <person name="Parkhill J."/>
            <person name="Garnier T."/>
            <person name="Churcher C.M."/>
            <person name="Harris D.E."/>
            <person name="Gordon S.V."/>
            <person name="Eiglmeier K."/>
            <person name="Gas S."/>
            <person name="Barry C.E. III"/>
            <person name="Tekaia F."/>
            <person name="Badcock K."/>
            <person name="Basham D."/>
            <person name="Brown D."/>
            <person name="Chillingworth T."/>
            <person name="Connor R."/>
            <person name="Davies R.M."/>
            <person name="Devlin K."/>
            <person name="Feltwell T."/>
            <person name="Gentles S."/>
            <person name="Hamlin N."/>
            <person name="Holroyd S."/>
            <person name="Hornsby T."/>
            <person name="Jagels K."/>
            <person name="Krogh A."/>
            <person name="McLean J."/>
            <person name="Moule S."/>
            <person name="Murphy L.D."/>
            <person name="Oliver S."/>
            <person name="Osborne J."/>
            <person name="Quail M.A."/>
            <person name="Rajandream M.A."/>
            <person name="Rogers J."/>
            <person name="Rutter S."/>
            <person name="Seeger K."/>
            <person name="Skelton S."/>
            <person name="Squares S."/>
            <person name="Squares R."/>
            <person name="Sulston J.E."/>
            <person name="Taylor K."/>
            <person name="Whitehead S."/>
            <person name="Barrell B.G."/>
        </authorList>
    </citation>
    <scope>NUCLEOTIDE SEQUENCE [LARGE SCALE GENOMIC DNA]</scope>
    <source>
        <strain>ATCC 25618 / H37Rv</strain>
    </source>
</reference>
<reference key="2">
    <citation type="journal article" date="2011" name="Mol. Cell. Proteomics">
        <title>Proteogenomic analysis of Mycobacterium tuberculosis by high resolution mass spectrometry.</title>
        <authorList>
            <person name="Kelkar D.S."/>
            <person name="Kumar D."/>
            <person name="Kumar P."/>
            <person name="Balakrishnan L."/>
            <person name="Muthusamy B."/>
            <person name="Yadav A.K."/>
            <person name="Shrivastava P."/>
            <person name="Marimuthu A."/>
            <person name="Anand S."/>
            <person name="Sundaram H."/>
            <person name="Kingsbury R."/>
            <person name="Harsha H.C."/>
            <person name="Nair B."/>
            <person name="Prasad T.S."/>
            <person name="Chauhan D.S."/>
            <person name="Katoch K."/>
            <person name="Katoch V.M."/>
            <person name="Kumar P."/>
            <person name="Chaerkady R."/>
            <person name="Ramachandran S."/>
            <person name="Dash D."/>
            <person name="Pandey A."/>
        </authorList>
    </citation>
    <scope>IDENTIFICATION BY MASS SPECTROMETRY [LARGE SCALE ANALYSIS]</scope>
    <source>
        <strain>ATCC 25618 / H37Rv</strain>
    </source>
</reference>
<evidence type="ECO:0000256" key="1">
    <source>
        <dbReference type="SAM" id="MobiDB-lite"/>
    </source>
</evidence>
<evidence type="ECO:0000305" key="2"/>
<gene>
    <name type="ordered locus">Rv0502</name>
    <name type="ORF">MTCY20G9.29</name>
</gene>
<proteinExistence type="evidence at protein level"/>
<protein>
    <recommendedName>
        <fullName>Uncharacterized protein Rv0502</fullName>
    </recommendedName>
</protein>
<accession>P9WKT1</accession>
<accession>L0T5K0</accession>
<accession>P64723</accession>
<accession>Q11167</accession>
<comment type="similarity">
    <text evidence="2">To M.leprae ML2427.</text>
</comment>
<keyword id="KW-1185">Reference proteome</keyword>
<name>Y502_MYCTU</name>
<organism>
    <name type="scientific">Mycobacterium tuberculosis (strain ATCC 25618 / H37Rv)</name>
    <dbReference type="NCBI Taxonomy" id="83332"/>
    <lineage>
        <taxon>Bacteria</taxon>
        <taxon>Bacillati</taxon>
        <taxon>Actinomycetota</taxon>
        <taxon>Actinomycetes</taxon>
        <taxon>Mycobacteriales</taxon>
        <taxon>Mycobacteriaceae</taxon>
        <taxon>Mycobacterium</taxon>
        <taxon>Mycobacterium tuberculosis complex</taxon>
    </lineage>
</organism>
<sequence length="358" mass="39288">MGNVAGETRANVIPLHTNRSRVAARRRAGQRAESRQHPSLLSDPNDRASAEQIAAVVREIDEHRRAAGATTSSTEATPNDLAQLVAAVAGFLRQRLTGDYSVDEFGFDPHFNSAIVRPLLRFFFKSWFRVEVSGVENIPRDGAALVVANHAGVLPFDGLMLSVAVHDEHPAHRDLRLLAADMVFDLPVIGEAARKAGHTMACTTDAHRLLASGELTAVFPEGYKGLGKRFEDRYRLQRFGRGGFVSAALRTKAPIVPCSIIGSEEIYPMLTDVKLLARLFGLPYFPITPLFPLAGPVGLVPLPSKWRIAFGEPICTADYASTDADDPMVTFELTDQVRETIQQTLYRLLAGRRNIFFG</sequence>
<feature type="chain" id="PRO_0000103709" description="Uncharacterized protein Rv0502">
    <location>
        <begin position="1"/>
        <end position="358"/>
    </location>
</feature>
<feature type="region of interest" description="Disordered" evidence="1">
    <location>
        <begin position="1"/>
        <end position="47"/>
    </location>
</feature>
<feature type="compositionally biased region" description="Basic residues" evidence="1">
    <location>
        <begin position="18"/>
        <end position="29"/>
    </location>
</feature>